<name>PAX_I56A2</name>
<organism>
    <name type="scientific">Influenza A virus (strain A/Duck/England/1/1956 H11N6)</name>
    <dbReference type="NCBI Taxonomy" id="383550"/>
    <lineage>
        <taxon>Viruses</taxon>
        <taxon>Riboviria</taxon>
        <taxon>Orthornavirae</taxon>
        <taxon>Negarnaviricota</taxon>
        <taxon>Polyploviricotina</taxon>
        <taxon>Insthoviricetes</taxon>
        <taxon>Articulavirales</taxon>
        <taxon>Orthomyxoviridae</taxon>
        <taxon>Alphainfluenzavirus</taxon>
        <taxon>Alphainfluenzavirus influenzae</taxon>
        <taxon>Influenza A virus</taxon>
    </lineage>
</organism>
<gene>
    <name type="primary">PA</name>
</gene>
<protein>
    <recommendedName>
        <fullName>Protein PA-X</fullName>
    </recommendedName>
</protein>
<sequence length="252" mass="29337">MEDFVRQCFNPMIVELAEKAMKEYGEDPKIETNKFAAICTHLEVCFMYSDFHFIDERGESIIVEPGDPNALLKHRFEIIEGRDRTVAWTVVNSICNTTGVEKPKFLPDLYDYKENRFIEIGVTRREVHIYYLEKANKIKSEKTHIHIFSFTGEEMATKADYTLDEESRARIKTRLFTIRQEMASRGLWDSFVNPREAKRQLKKDLRSQEPCAGSPTKVSHRTSPALKTLEPMWMDSNRTAALRASFLKCPKK</sequence>
<evidence type="ECO:0000250" key="1">
    <source>
        <dbReference type="UniProtKB" id="P0CK64"/>
    </source>
</evidence>
<evidence type="ECO:0000250" key="2">
    <source>
        <dbReference type="UniProtKB" id="P0CK68"/>
    </source>
</evidence>
<evidence type="ECO:0000250" key="3">
    <source>
        <dbReference type="UniProtKB" id="P0DJW8"/>
    </source>
</evidence>
<evidence type="ECO:0000250" key="4">
    <source>
        <dbReference type="UniProtKB" id="P0DXO5"/>
    </source>
</evidence>
<evidence type="ECO:0000256" key="5">
    <source>
        <dbReference type="SAM" id="MobiDB-lite"/>
    </source>
</evidence>
<evidence type="ECO:0000305" key="6"/>
<organismHost>
    <name type="scientific">Aves</name>
    <dbReference type="NCBI Taxonomy" id="8782"/>
</organismHost>
<comment type="function">
    <text evidence="1 4">Plays a major role in the shutoff of the host protein expression by cleaving mRNAs probably via an endonuclease activity. This host shutoff allows the virus to escape from the host antiviral response (By similarity). Hijacks host RNA splicing machinery to selectively target host RNAs containing introns for destruction. This may explain the preferential degradation of RNAs that have undergone co- or post-transcriptional processing (By similarity).</text>
</comment>
<comment type="subcellular location">
    <subcellularLocation>
        <location evidence="4">Host cytoplasm</location>
    </subcellularLocation>
    <subcellularLocation>
        <location evidence="4">Host nucleus</location>
    </subcellularLocation>
</comment>
<comment type="alternative products">
    <event type="ribosomal frameshifting"/>
    <isoform>
        <id>P0CK81-1</id>
        <name>PA-X</name>
        <sequence type="displayed"/>
    </isoform>
    <isoform>
        <id>Q0A430-1</id>
        <name>PA</name>
        <sequence type="external"/>
    </isoform>
</comment>
<comment type="domain">
    <text evidence="1 4">The probable endonuclease active site in the N-terminus and the basic amino acid cluster in the C-terminus are important for the shutoff activity. The C-terminus acts as a nuclear localization signal (By similarity). The C-terminus is recruited to host protein complexes involved in nuclear Pol II RNA processing (By similarity).</text>
</comment>
<comment type="similarity">
    <text evidence="6">Belongs to the influenza viruses PA-X family.</text>
</comment>
<accession>P0CK81</accession>
<proteinExistence type="inferred from homology"/>
<feature type="chain" id="PRO_0000419364" description="Protein PA-X">
    <location>
        <begin position="1"/>
        <end position="252"/>
    </location>
</feature>
<feature type="region of interest" description="Disordered" evidence="5">
    <location>
        <begin position="202"/>
        <end position="223"/>
    </location>
</feature>
<feature type="active site" evidence="2">
    <location>
        <position position="80"/>
    </location>
</feature>
<feature type="active site" evidence="2">
    <location>
        <position position="108"/>
    </location>
</feature>
<feature type="site" description="Important for efficient shutoff activity and nuclear localization" evidence="4">
    <location>
        <position position="195"/>
    </location>
</feature>
<feature type="site" description="Important for efficient shutoff activity and nuclear localization" evidence="4">
    <location>
        <position position="198"/>
    </location>
</feature>
<feature type="site" description="Important for efficient shutoff activity and nuclear localization" evidence="4">
    <location>
        <position position="199"/>
    </location>
</feature>
<feature type="site" description="Important for efficient shutoff activity" evidence="3">
    <location>
        <position position="202"/>
    </location>
</feature>
<feature type="site" description="Important for efficient shutoff activity" evidence="3">
    <location>
        <position position="203"/>
    </location>
</feature>
<keyword id="KW-1132">Decay of host mRNAs by virus</keyword>
<keyword id="KW-1262">Eukaryotic host gene expression shutoff by virus</keyword>
<keyword id="KW-1035">Host cytoplasm</keyword>
<keyword id="KW-1190">Host gene expression shutoff by virus</keyword>
<keyword id="KW-1192">Host mRNA suppression by virus</keyword>
<keyword id="KW-1048">Host nucleus</keyword>
<keyword id="KW-0945">Host-virus interaction</keyword>
<keyword id="KW-0688">Ribosomal frameshifting</keyword>
<reference key="1">
    <citation type="journal article" date="2006" name="Science">
        <title>Large-scale sequence analysis of avian influenza isolates.</title>
        <authorList>
            <person name="Obenauer J.C."/>
            <person name="Denson J."/>
            <person name="Mehta P.K."/>
            <person name="Su X."/>
            <person name="Mukatira S."/>
            <person name="Finkelstein D.B."/>
            <person name="Xu X."/>
            <person name="Wang J."/>
            <person name="Ma J."/>
            <person name="Fan Y."/>
            <person name="Rakestraw K.M."/>
            <person name="Webster R.G."/>
            <person name="Hoffmann E."/>
            <person name="Krauss S."/>
            <person name="Zheng J."/>
            <person name="Zhang Z."/>
            <person name="Naeve C.W."/>
        </authorList>
    </citation>
    <scope>NUCLEOTIDE SEQUENCE [GENOMIC RNA]</scope>
</reference>
<dbReference type="EMBL" id="CY014684">
    <property type="status" value="NOT_ANNOTATED_CDS"/>
    <property type="molecule type" value="Genomic_RNA"/>
</dbReference>
<dbReference type="SMR" id="P0CK81"/>
<dbReference type="Proteomes" id="UP000155465">
    <property type="component" value="Genome"/>
</dbReference>
<dbReference type="GO" id="GO:0003723">
    <property type="term" value="F:RNA binding"/>
    <property type="evidence" value="ECO:0007669"/>
    <property type="project" value="InterPro"/>
</dbReference>
<dbReference type="GO" id="GO:0039694">
    <property type="term" value="P:viral RNA genome replication"/>
    <property type="evidence" value="ECO:0007669"/>
    <property type="project" value="InterPro"/>
</dbReference>
<dbReference type="GO" id="GO:0075523">
    <property type="term" value="P:viral translational frameshifting"/>
    <property type="evidence" value="ECO:0007669"/>
    <property type="project" value="UniProtKB-KW"/>
</dbReference>
<dbReference type="FunFam" id="3.40.91.90:FF:000001">
    <property type="entry name" value="Polymerase acidic protein"/>
    <property type="match status" value="1"/>
</dbReference>
<dbReference type="Gene3D" id="3.40.91.90">
    <property type="entry name" value="Influenza RNA-dependent RNA polymerase subunit PA, endonuclease domain"/>
    <property type="match status" value="1"/>
</dbReference>
<dbReference type="InterPro" id="IPR001009">
    <property type="entry name" value="PA/PA-X"/>
</dbReference>
<dbReference type="InterPro" id="IPR038372">
    <property type="entry name" value="PA/PA-X_sf"/>
</dbReference>
<dbReference type="Pfam" id="PF00603">
    <property type="entry name" value="Flu_PA"/>
    <property type="match status" value="1"/>
</dbReference>